<feature type="chain" id="PRO_1000023521" description="3-dehydroquinate dehydratase">
    <location>
        <begin position="1"/>
        <end position="150"/>
    </location>
</feature>
<feature type="active site" description="Proton acceptor" evidence="1">
    <location>
        <position position="26"/>
    </location>
</feature>
<feature type="active site" description="Proton donor" evidence="1">
    <location>
        <position position="103"/>
    </location>
</feature>
<feature type="binding site" evidence="1">
    <location>
        <position position="77"/>
    </location>
    <ligand>
        <name>substrate</name>
    </ligand>
</feature>
<feature type="binding site" evidence="1">
    <location>
        <position position="83"/>
    </location>
    <ligand>
        <name>substrate</name>
    </ligand>
</feature>
<feature type="binding site" evidence="1">
    <location>
        <position position="90"/>
    </location>
    <ligand>
        <name>substrate</name>
    </ligand>
</feature>
<feature type="binding site" evidence="1">
    <location>
        <begin position="104"/>
        <end position="105"/>
    </location>
    <ligand>
        <name>substrate</name>
    </ligand>
</feature>
<feature type="binding site" evidence="1">
    <location>
        <position position="114"/>
    </location>
    <ligand>
        <name>substrate</name>
    </ligand>
</feature>
<feature type="site" description="Transition state stabilizer" evidence="1">
    <location>
        <position position="21"/>
    </location>
</feature>
<organism>
    <name type="scientific">Sodalis glossinidius (strain morsitans)</name>
    <dbReference type="NCBI Taxonomy" id="343509"/>
    <lineage>
        <taxon>Bacteria</taxon>
        <taxon>Pseudomonadati</taxon>
        <taxon>Pseudomonadota</taxon>
        <taxon>Gammaproteobacteria</taxon>
        <taxon>Enterobacterales</taxon>
        <taxon>Bruguierivoracaceae</taxon>
        <taxon>Sodalis</taxon>
    </lineage>
</organism>
<evidence type="ECO:0000255" key="1">
    <source>
        <dbReference type="HAMAP-Rule" id="MF_00169"/>
    </source>
</evidence>
<dbReference type="EC" id="4.2.1.10" evidence="1"/>
<dbReference type="EMBL" id="AP008232">
    <property type="protein sequence ID" value="BAE73429.1"/>
    <property type="molecule type" value="Genomic_DNA"/>
</dbReference>
<dbReference type="RefSeq" id="WP_011410018.1">
    <property type="nucleotide sequence ID" value="NC_007712.1"/>
</dbReference>
<dbReference type="SMR" id="Q2NWP6"/>
<dbReference type="STRING" id="343509.SG0154"/>
<dbReference type="KEGG" id="sgl:SG0154"/>
<dbReference type="eggNOG" id="COG0757">
    <property type="taxonomic scope" value="Bacteria"/>
</dbReference>
<dbReference type="HOGENOM" id="CLU_090968_1_0_6"/>
<dbReference type="OrthoDB" id="9790793at2"/>
<dbReference type="UniPathway" id="UPA00053">
    <property type="reaction ID" value="UER00086"/>
</dbReference>
<dbReference type="Proteomes" id="UP000001932">
    <property type="component" value="Chromosome"/>
</dbReference>
<dbReference type="GO" id="GO:0003855">
    <property type="term" value="F:3-dehydroquinate dehydratase activity"/>
    <property type="evidence" value="ECO:0007669"/>
    <property type="project" value="UniProtKB-UniRule"/>
</dbReference>
<dbReference type="GO" id="GO:0008652">
    <property type="term" value="P:amino acid biosynthetic process"/>
    <property type="evidence" value="ECO:0007669"/>
    <property type="project" value="UniProtKB-KW"/>
</dbReference>
<dbReference type="GO" id="GO:0009073">
    <property type="term" value="P:aromatic amino acid family biosynthetic process"/>
    <property type="evidence" value="ECO:0007669"/>
    <property type="project" value="UniProtKB-KW"/>
</dbReference>
<dbReference type="GO" id="GO:0009423">
    <property type="term" value="P:chorismate biosynthetic process"/>
    <property type="evidence" value="ECO:0007669"/>
    <property type="project" value="UniProtKB-UniRule"/>
</dbReference>
<dbReference type="GO" id="GO:0019631">
    <property type="term" value="P:quinate catabolic process"/>
    <property type="evidence" value="ECO:0007669"/>
    <property type="project" value="TreeGrafter"/>
</dbReference>
<dbReference type="CDD" id="cd00466">
    <property type="entry name" value="DHQase_II"/>
    <property type="match status" value="1"/>
</dbReference>
<dbReference type="Gene3D" id="3.40.50.9100">
    <property type="entry name" value="Dehydroquinase, class II"/>
    <property type="match status" value="1"/>
</dbReference>
<dbReference type="HAMAP" id="MF_00169">
    <property type="entry name" value="AroQ"/>
    <property type="match status" value="1"/>
</dbReference>
<dbReference type="InterPro" id="IPR001874">
    <property type="entry name" value="DHquinase_II"/>
</dbReference>
<dbReference type="InterPro" id="IPR018509">
    <property type="entry name" value="DHquinase_II_CS"/>
</dbReference>
<dbReference type="InterPro" id="IPR036441">
    <property type="entry name" value="DHquinase_II_sf"/>
</dbReference>
<dbReference type="NCBIfam" id="TIGR01088">
    <property type="entry name" value="aroQ"/>
    <property type="match status" value="1"/>
</dbReference>
<dbReference type="NCBIfam" id="NF003804">
    <property type="entry name" value="PRK05395.1-1"/>
    <property type="match status" value="1"/>
</dbReference>
<dbReference type="NCBIfam" id="NF003805">
    <property type="entry name" value="PRK05395.1-2"/>
    <property type="match status" value="1"/>
</dbReference>
<dbReference type="NCBIfam" id="NF003806">
    <property type="entry name" value="PRK05395.1-3"/>
    <property type="match status" value="1"/>
</dbReference>
<dbReference type="NCBIfam" id="NF003807">
    <property type="entry name" value="PRK05395.1-4"/>
    <property type="match status" value="1"/>
</dbReference>
<dbReference type="PANTHER" id="PTHR21272">
    <property type="entry name" value="CATABOLIC 3-DEHYDROQUINASE"/>
    <property type="match status" value="1"/>
</dbReference>
<dbReference type="PANTHER" id="PTHR21272:SF3">
    <property type="entry name" value="CATABOLIC 3-DEHYDROQUINASE"/>
    <property type="match status" value="1"/>
</dbReference>
<dbReference type="Pfam" id="PF01220">
    <property type="entry name" value="DHquinase_II"/>
    <property type="match status" value="1"/>
</dbReference>
<dbReference type="PIRSF" id="PIRSF001399">
    <property type="entry name" value="DHquinase_II"/>
    <property type="match status" value="1"/>
</dbReference>
<dbReference type="SUPFAM" id="SSF52304">
    <property type="entry name" value="Type II 3-dehydroquinate dehydratase"/>
    <property type="match status" value="1"/>
</dbReference>
<dbReference type="PROSITE" id="PS01029">
    <property type="entry name" value="DEHYDROQUINASE_II"/>
    <property type="match status" value="1"/>
</dbReference>
<reference key="1">
    <citation type="journal article" date="2006" name="Genome Res.">
        <title>Massive genome erosion and functional adaptations provide insights into the symbiotic lifestyle of Sodalis glossinidius in the tsetse host.</title>
        <authorList>
            <person name="Toh H."/>
            <person name="Weiss B.L."/>
            <person name="Perkin S.A.H."/>
            <person name="Yamashita A."/>
            <person name="Oshima K."/>
            <person name="Hattori M."/>
            <person name="Aksoy S."/>
        </authorList>
    </citation>
    <scope>NUCLEOTIDE SEQUENCE [LARGE SCALE GENOMIC DNA]</scope>
    <source>
        <strain>morsitans</strain>
    </source>
</reference>
<protein>
    <recommendedName>
        <fullName evidence="1">3-dehydroquinate dehydratase</fullName>
        <shortName evidence="1">3-dehydroquinase</shortName>
        <ecNumber evidence="1">4.2.1.10</ecNumber>
    </recommendedName>
    <alternativeName>
        <fullName evidence="1">Type II DHQase</fullName>
    </alternativeName>
</protein>
<sequence>MADKFHILLLNGPNLNLLGTREPDKYGHTTLADITADLSALAGSLGAEFSHFQSNAEHALIDRIHQARGNTDFIVINPAAFTHTSVALRDALLAVNIPFIEIHLSNVHAREPFRHHSYLSDIAIGVICGLGADGYHFALQTAVKRLSTSN</sequence>
<proteinExistence type="inferred from homology"/>
<accession>Q2NWP6</accession>
<comment type="function">
    <text evidence="1">Catalyzes a trans-dehydration via an enolate intermediate.</text>
</comment>
<comment type="catalytic activity">
    <reaction evidence="1">
        <text>3-dehydroquinate = 3-dehydroshikimate + H2O</text>
        <dbReference type="Rhea" id="RHEA:21096"/>
        <dbReference type="ChEBI" id="CHEBI:15377"/>
        <dbReference type="ChEBI" id="CHEBI:16630"/>
        <dbReference type="ChEBI" id="CHEBI:32364"/>
        <dbReference type="EC" id="4.2.1.10"/>
    </reaction>
</comment>
<comment type="pathway">
    <text evidence="1">Metabolic intermediate biosynthesis; chorismate biosynthesis; chorismate from D-erythrose 4-phosphate and phosphoenolpyruvate: step 3/7.</text>
</comment>
<comment type="subunit">
    <text evidence="1">Homododecamer.</text>
</comment>
<comment type="similarity">
    <text evidence="1">Belongs to the type-II 3-dehydroquinase family.</text>
</comment>
<gene>
    <name evidence="1" type="primary">aroQ</name>
    <name type="ordered locus">SG0154</name>
</gene>
<name>AROQ_SODGM</name>
<keyword id="KW-0028">Amino-acid biosynthesis</keyword>
<keyword id="KW-0057">Aromatic amino acid biosynthesis</keyword>
<keyword id="KW-0456">Lyase</keyword>